<feature type="chain" id="PRO_1000066507" description="FMN-dependent NADH:quinone oxidoreductase">
    <location>
        <begin position="1"/>
        <end position="201"/>
    </location>
</feature>
<feature type="binding site" evidence="1">
    <location>
        <position position="10"/>
    </location>
    <ligand>
        <name>FMN</name>
        <dbReference type="ChEBI" id="CHEBI:58210"/>
    </ligand>
</feature>
<feature type="binding site" evidence="1">
    <location>
        <begin position="16"/>
        <end position="18"/>
    </location>
    <ligand>
        <name>FMN</name>
        <dbReference type="ChEBI" id="CHEBI:58210"/>
    </ligand>
</feature>
<feature type="binding site" evidence="1">
    <location>
        <begin position="96"/>
        <end position="99"/>
    </location>
    <ligand>
        <name>FMN</name>
        <dbReference type="ChEBI" id="CHEBI:58210"/>
    </ligand>
</feature>
<feature type="binding site" evidence="1">
    <location>
        <begin position="140"/>
        <end position="143"/>
    </location>
    <ligand>
        <name>FMN</name>
        <dbReference type="ChEBI" id="CHEBI:58210"/>
    </ligand>
</feature>
<name>AZOR_CROS8</name>
<accession>A7MEJ8</accession>
<evidence type="ECO:0000255" key="1">
    <source>
        <dbReference type="HAMAP-Rule" id="MF_01216"/>
    </source>
</evidence>
<organism>
    <name type="scientific">Cronobacter sakazakii (strain ATCC BAA-894)</name>
    <name type="common">Enterobacter sakazakii</name>
    <dbReference type="NCBI Taxonomy" id="290339"/>
    <lineage>
        <taxon>Bacteria</taxon>
        <taxon>Pseudomonadati</taxon>
        <taxon>Pseudomonadota</taxon>
        <taxon>Gammaproteobacteria</taxon>
        <taxon>Enterobacterales</taxon>
        <taxon>Enterobacteriaceae</taxon>
        <taxon>Cronobacter</taxon>
    </lineage>
</organism>
<proteinExistence type="inferred from homology"/>
<dbReference type="EC" id="1.6.5.-" evidence="1"/>
<dbReference type="EC" id="1.7.1.17" evidence="1"/>
<dbReference type="EMBL" id="CP000783">
    <property type="protein sequence ID" value="ABU76946.1"/>
    <property type="molecule type" value="Genomic_DNA"/>
</dbReference>
<dbReference type="RefSeq" id="WP_004386715.1">
    <property type="nucleotide sequence ID" value="NC_009778.1"/>
</dbReference>
<dbReference type="SMR" id="A7MEJ8"/>
<dbReference type="GeneID" id="56730513"/>
<dbReference type="KEGG" id="esa:ESA_01692"/>
<dbReference type="HOGENOM" id="CLU_088964_0_0_6"/>
<dbReference type="Proteomes" id="UP000000260">
    <property type="component" value="Chromosome"/>
</dbReference>
<dbReference type="GO" id="GO:0009055">
    <property type="term" value="F:electron transfer activity"/>
    <property type="evidence" value="ECO:0007669"/>
    <property type="project" value="UniProtKB-UniRule"/>
</dbReference>
<dbReference type="GO" id="GO:0010181">
    <property type="term" value="F:FMN binding"/>
    <property type="evidence" value="ECO:0007669"/>
    <property type="project" value="UniProtKB-UniRule"/>
</dbReference>
<dbReference type="GO" id="GO:0016652">
    <property type="term" value="F:oxidoreductase activity, acting on NAD(P)H as acceptor"/>
    <property type="evidence" value="ECO:0007669"/>
    <property type="project" value="UniProtKB-UniRule"/>
</dbReference>
<dbReference type="GO" id="GO:0016655">
    <property type="term" value="F:oxidoreductase activity, acting on NAD(P)H, quinone or similar compound as acceptor"/>
    <property type="evidence" value="ECO:0007669"/>
    <property type="project" value="InterPro"/>
</dbReference>
<dbReference type="FunFam" id="3.40.50.360:FF:000010">
    <property type="entry name" value="FMN-dependent NADH-azoreductase"/>
    <property type="match status" value="1"/>
</dbReference>
<dbReference type="Gene3D" id="3.40.50.360">
    <property type="match status" value="1"/>
</dbReference>
<dbReference type="HAMAP" id="MF_01216">
    <property type="entry name" value="Azoreductase_type1"/>
    <property type="match status" value="1"/>
</dbReference>
<dbReference type="InterPro" id="IPR003680">
    <property type="entry name" value="Flavodoxin_fold"/>
</dbReference>
<dbReference type="InterPro" id="IPR029039">
    <property type="entry name" value="Flavoprotein-like_sf"/>
</dbReference>
<dbReference type="InterPro" id="IPR050104">
    <property type="entry name" value="FMN-dep_NADH:Q_OxRdtase_AzoR1"/>
</dbReference>
<dbReference type="InterPro" id="IPR023048">
    <property type="entry name" value="NADH:quinone_OxRdtase_FMN_depd"/>
</dbReference>
<dbReference type="PANTHER" id="PTHR43741">
    <property type="entry name" value="FMN-DEPENDENT NADH-AZOREDUCTASE 1"/>
    <property type="match status" value="1"/>
</dbReference>
<dbReference type="PANTHER" id="PTHR43741:SF2">
    <property type="entry name" value="FMN-DEPENDENT NADH:QUINONE OXIDOREDUCTASE"/>
    <property type="match status" value="1"/>
</dbReference>
<dbReference type="Pfam" id="PF02525">
    <property type="entry name" value="Flavodoxin_2"/>
    <property type="match status" value="1"/>
</dbReference>
<dbReference type="SUPFAM" id="SSF52218">
    <property type="entry name" value="Flavoproteins"/>
    <property type="match status" value="1"/>
</dbReference>
<protein>
    <recommendedName>
        <fullName evidence="1">FMN-dependent NADH:quinone oxidoreductase</fullName>
        <ecNumber evidence="1">1.6.5.-</ecNumber>
    </recommendedName>
    <alternativeName>
        <fullName evidence="1">Azo-dye reductase</fullName>
    </alternativeName>
    <alternativeName>
        <fullName evidence="1">FMN-dependent NADH-azo compound oxidoreductase</fullName>
    </alternativeName>
    <alternativeName>
        <fullName evidence="1">FMN-dependent NADH-azoreductase</fullName>
        <ecNumber evidence="1">1.7.1.17</ecNumber>
    </alternativeName>
</protein>
<gene>
    <name evidence="1" type="primary">azoR</name>
    <name type="ordered locus">ESA_01692</name>
</gene>
<sequence>MSKVLVLKSSILAGYSQSNQLSDYFVEQWREKHSADEITVRDLAANPVPVLDGELVGALRPSDAPLTPRQQDALSLSDELIAELQAHDVIVIAAPMYNFNIPTQLKNYFDLVARAGVTFRYTEKGPEGLVTGKRAIVLTSRGGIHKDTPTDLVTPYLSLFLGFIGITDVNFVFAEGVAYGPEMATKAQSDAKAAIDALVSA</sequence>
<reference key="1">
    <citation type="journal article" date="2010" name="PLoS ONE">
        <title>Genome sequence of Cronobacter sakazakii BAA-894 and comparative genomic hybridization analysis with other Cronobacter species.</title>
        <authorList>
            <person name="Kucerova E."/>
            <person name="Clifton S.W."/>
            <person name="Xia X.Q."/>
            <person name="Long F."/>
            <person name="Porwollik S."/>
            <person name="Fulton L."/>
            <person name="Fronick C."/>
            <person name="Minx P."/>
            <person name="Kyung K."/>
            <person name="Warren W."/>
            <person name="Fulton R."/>
            <person name="Feng D."/>
            <person name="Wollam A."/>
            <person name="Shah N."/>
            <person name="Bhonagiri V."/>
            <person name="Nash W.E."/>
            <person name="Hallsworth-Pepin K."/>
            <person name="Wilson R.K."/>
            <person name="McClelland M."/>
            <person name="Forsythe S.J."/>
        </authorList>
    </citation>
    <scope>NUCLEOTIDE SEQUENCE [LARGE SCALE GENOMIC DNA]</scope>
    <source>
        <strain>ATCC BAA-894</strain>
    </source>
</reference>
<comment type="function">
    <text evidence="1">Quinone reductase that provides resistance to thiol-specific stress caused by electrophilic quinones.</text>
</comment>
<comment type="function">
    <text evidence="1">Also exhibits azoreductase activity. Catalyzes the reductive cleavage of the azo bond in aromatic azo compounds to the corresponding amines.</text>
</comment>
<comment type="catalytic activity">
    <reaction evidence="1">
        <text>2 a quinone + NADH + H(+) = 2 a 1,4-benzosemiquinone + NAD(+)</text>
        <dbReference type="Rhea" id="RHEA:65952"/>
        <dbReference type="ChEBI" id="CHEBI:15378"/>
        <dbReference type="ChEBI" id="CHEBI:57540"/>
        <dbReference type="ChEBI" id="CHEBI:57945"/>
        <dbReference type="ChEBI" id="CHEBI:132124"/>
        <dbReference type="ChEBI" id="CHEBI:134225"/>
    </reaction>
</comment>
<comment type="catalytic activity">
    <reaction evidence="1">
        <text>N,N-dimethyl-1,4-phenylenediamine + anthranilate + 2 NAD(+) = 2-(4-dimethylaminophenyl)diazenylbenzoate + 2 NADH + 2 H(+)</text>
        <dbReference type="Rhea" id="RHEA:55872"/>
        <dbReference type="ChEBI" id="CHEBI:15378"/>
        <dbReference type="ChEBI" id="CHEBI:15783"/>
        <dbReference type="ChEBI" id="CHEBI:16567"/>
        <dbReference type="ChEBI" id="CHEBI:57540"/>
        <dbReference type="ChEBI" id="CHEBI:57945"/>
        <dbReference type="ChEBI" id="CHEBI:71579"/>
        <dbReference type="EC" id="1.7.1.17"/>
    </reaction>
</comment>
<comment type="cofactor">
    <cofactor evidence="1">
        <name>FMN</name>
        <dbReference type="ChEBI" id="CHEBI:58210"/>
    </cofactor>
    <text evidence="1">Binds 1 FMN per subunit.</text>
</comment>
<comment type="subunit">
    <text evidence="1">Homodimer.</text>
</comment>
<comment type="similarity">
    <text evidence="1">Belongs to the azoreductase type 1 family.</text>
</comment>
<keyword id="KW-0285">Flavoprotein</keyword>
<keyword id="KW-0288">FMN</keyword>
<keyword id="KW-0520">NAD</keyword>
<keyword id="KW-0560">Oxidoreductase</keyword>
<keyword id="KW-1185">Reference proteome</keyword>